<keyword id="KW-0256">Endoplasmic reticulum</keyword>
<keyword id="KW-0378">Hydrolase</keyword>
<keyword id="KW-0472">Membrane</keyword>
<keyword id="KW-0812">Transmembrane</keyword>
<keyword id="KW-1133">Transmembrane helix</keyword>
<dbReference type="EC" id="3.6.1.43"/>
<dbReference type="EMBL" id="DP000635">
    <property type="protein sequence ID" value="ACA57902.1"/>
    <property type="molecule type" value="Genomic_DNA"/>
</dbReference>
<dbReference type="UniPathway" id="UPA00378"/>
<dbReference type="GO" id="GO:0005789">
    <property type="term" value="C:endoplasmic reticulum membrane"/>
    <property type="evidence" value="ECO:0007669"/>
    <property type="project" value="UniProtKB-SubCell"/>
</dbReference>
<dbReference type="GO" id="GO:0047874">
    <property type="term" value="F:dolichyldiphosphatase activity"/>
    <property type="evidence" value="ECO:0007669"/>
    <property type="project" value="UniProtKB-EC"/>
</dbReference>
<dbReference type="GO" id="GO:0008610">
    <property type="term" value="P:lipid biosynthetic process"/>
    <property type="evidence" value="ECO:0007669"/>
    <property type="project" value="TreeGrafter"/>
</dbReference>
<dbReference type="GO" id="GO:0006487">
    <property type="term" value="P:protein N-linked glycosylation"/>
    <property type="evidence" value="ECO:0007669"/>
    <property type="project" value="TreeGrafter"/>
</dbReference>
<dbReference type="CDD" id="cd03382">
    <property type="entry name" value="PAP2_dolichyldiphosphatase"/>
    <property type="match status" value="1"/>
</dbReference>
<dbReference type="FunFam" id="1.20.144.10:FF:000003">
    <property type="entry name" value="Dolichyldiphosphatase 1"/>
    <property type="match status" value="1"/>
</dbReference>
<dbReference type="Gene3D" id="1.20.144.10">
    <property type="entry name" value="Phosphatidic acid phosphatase type 2/haloperoxidase"/>
    <property type="match status" value="1"/>
</dbReference>
<dbReference type="InterPro" id="IPR039667">
    <property type="entry name" value="Dolichyldiphosphatase_PAP2"/>
</dbReference>
<dbReference type="InterPro" id="IPR036938">
    <property type="entry name" value="P_Acid_Pase_2/haloperoxi_sf"/>
</dbReference>
<dbReference type="InterPro" id="IPR000326">
    <property type="entry name" value="P_Acid_Pase_2/haloperoxidase"/>
</dbReference>
<dbReference type="PANTHER" id="PTHR11247:SF1">
    <property type="entry name" value="DOLICHYLDIPHOSPHATASE 1"/>
    <property type="match status" value="1"/>
</dbReference>
<dbReference type="PANTHER" id="PTHR11247">
    <property type="entry name" value="PALMITOYL-PROTEIN THIOESTERASE/DOLICHYLDIPHOSPHATASE 1"/>
    <property type="match status" value="1"/>
</dbReference>
<dbReference type="Pfam" id="PF01569">
    <property type="entry name" value="PAP2"/>
    <property type="match status" value="1"/>
</dbReference>
<dbReference type="SMART" id="SM00014">
    <property type="entry name" value="acidPPc"/>
    <property type="match status" value="1"/>
</dbReference>
<dbReference type="SUPFAM" id="SSF48317">
    <property type="entry name" value="Acid phosphatase/Vanadium-dependent haloperoxidase"/>
    <property type="match status" value="1"/>
</dbReference>
<feature type="chain" id="PRO_0000344995" description="Dolichyldiphosphatase 1">
    <location>
        <begin position="1"/>
        <end position="238"/>
    </location>
</feature>
<feature type="transmembrane region" description="Helical" evidence="2">
    <location>
        <begin position="33"/>
        <end position="53"/>
    </location>
</feature>
<feature type="transmembrane region" description="Helical" evidence="2">
    <location>
        <begin position="100"/>
        <end position="120"/>
    </location>
</feature>
<feature type="transmembrane region" description="Helical" evidence="2">
    <location>
        <begin position="130"/>
        <end position="150"/>
    </location>
</feature>
<feature type="transmembrane region" description="Helical" evidence="2">
    <location>
        <begin position="162"/>
        <end position="182"/>
    </location>
</feature>
<evidence type="ECO:0000250" key="1"/>
<evidence type="ECO:0000255" key="2"/>
<evidence type="ECO:0000305" key="3"/>
<gene>
    <name type="primary">DOLPP1</name>
</gene>
<protein>
    <recommendedName>
        <fullName>Dolichyldiphosphatase 1</fullName>
        <ecNumber>3.6.1.43</ecNumber>
    </recommendedName>
    <alternativeName>
        <fullName>Dolichyl pyrophosphate phosphatase 1</fullName>
    </alternativeName>
</protein>
<organism>
    <name type="scientific">Plecturocebus moloch</name>
    <name type="common">Dusky titi monkey</name>
    <name type="synonym">Callicebus moloch</name>
    <dbReference type="NCBI Taxonomy" id="9523"/>
    <lineage>
        <taxon>Eukaryota</taxon>
        <taxon>Metazoa</taxon>
        <taxon>Chordata</taxon>
        <taxon>Craniata</taxon>
        <taxon>Vertebrata</taxon>
        <taxon>Euteleostomi</taxon>
        <taxon>Mammalia</taxon>
        <taxon>Eutheria</taxon>
        <taxon>Euarchontoglires</taxon>
        <taxon>Primates</taxon>
        <taxon>Haplorrhini</taxon>
        <taxon>Platyrrhini</taxon>
        <taxon>Pitheciidae</taxon>
        <taxon>Callicebinae</taxon>
        <taxon>Plecturocebus</taxon>
    </lineage>
</organism>
<accession>B1MTH4</accession>
<proteinExistence type="inferred from homology"/>
<reference key="1">
    <citation type="submission" date="2008-03" db="EMBL/GenBank/DDBJ databases">
        <title>NISC comparative sequencing initiative.</title>
        <authorList>
            <person name="Antonellis A."/>
            <person name="Benjamin B."/>
            <person name="Blakesley R.W."/>
            <person name="Bouffard G.G."/>
            <person name="Brinkley C."/>
            <person name="Brooks S."/>
            <person name="Chu G."/>
            <person name="Chub I."/>
            <person name="Coleman H."/>
            <person name="Fuksenko T."/>
            <person name="Gestole M."/>
            <person name="Gregory M."/>
            <person name="Guan X."/>
            <person name="Gupta J."/>
            <person name="Gurson N."/>
            <person name="Han E."/>
            <person name="Han J."/>
            <person name="Hansen N."/>
            <person name="Hargrove A."/>
            <person name="Hines-Harris K."/>
            <person name="Ho S.-L."/>
            <person name="Hu P."/>
            <person name="Hunter G."/>
            <person name="Hurle B."/>
            <person name="Idol J.R."/>
            <person name="Johnson T."/>
            <person name="Knight E."/>
            <person name="Kwong P."/>
            <person name="Lee-Lin S.-Q."/>
            <person name="Legaspi R."/>
            <person name="Madden M."/>
            <person name="Maduro Q.L."/>
            <person name="Maduro V.B."/>
            <person name="Margulies E.H."/>
            <person name="Masiello C."/>
            <person name="Maskeri B."/>
            <person name="McDowell J."/>
            <person name="Merkulov G."/>
            <person name="Montemayor C."/>
            <person name="Mullikin J.C."/>
            <person name="Park M."/>
            <person name="Prasad A."/>
            <person name="Ramsahoye C."/>
            <person name="Reddix-Dugue N."/>
            <person name="Riebow N."/>
            <person name="Schandler K."/>
            <person name="Schueler M.G."/>
            <person name="Sison C."/>
            <person name="Smith L."/>
            <person name="Stantripop S."/>
            <person name="Thomas J.W."/>
            <person name="Thomas P.J."/>
            <person name="Tsipouri V."/>
            <person name="Young A."/>
            <person name="Green E.D."/>
        </authorList>
    </citation>
    <scope>NUCLEOTIDE SEQUENCE [LARGE SCALE GENOMIC DNA]</scope>
</reference>
<sequence>MAADGQCSLPASWRPVTLTHVEYPAGDLSGHLLAYLSLGPVFVIVGFVTLIIFKRELHTISFLGGLALNEGVNWLIKNVIQEPRPCGGPHTAVGTKYGMPSSHSQFMWFFSVYSFLFLYLRMHQTNNARFLDLLWRHVLSLGLLAAAFLVSYSRVYLLYHTWSQVLYGGIAGGLMAVAWFIFTQEVLTPLFPRIAAWPISEFFLIRDTSLIPNVLWFEYTVTRAEARNRQRKLGTKLQ</sequence>
<comment type="function">
    <text evidence="1">Required for efficient N-glycosylation. Necessary for maintaining optimal levels of dolichol-linked oligosaccharides. Hydrolyzes dolichyl pyrophosphate at a very high rate and dolichyl monophosphate at a much lower rate. Does not act on phosphatidate (By similarity).</text>
</comment>
<comment type="catalytic activity">
    <reaction>
        <text>a di-trans,poly-cis-dolichyl diphosphate + H2O = a di-trans,poly-cis-dolichyl phosphate + phosphate + H(+)</text>
        <dbReference type="Rhea" id="RHEA:14385"/>
        <dbReference type="Rhea" id="RHEA-COMP:19498"/>
        <dbReference type="Rhea" id="RHEA-COMP:19506"/>
        <dbReference type="ChEBI" id="CHEBI:15377"/>
        <dbReference type="ChEBI" id="CHEBI:15378"/>
        <dbReference type="ChEBI" id="CHEBI:43474"/>
        <dbReference type="ChEBI" id="CHEBI:57497"/>
        <dbReference type="ChEBI" id="CHEBI:57683"/>
        <dbReference type="EC" id="3.6.1.43"/>
    </reaction>
</comment>
<comment type="pathway">
    <text>Protein modification; protein glycosylation.</text>
</comment>
<comment type="subcellular location">
    <subcellularLocation>
        <location evidence="1">Endoplasmic reticulum membrane</location>
        <topology evidence="1">Multi-pass membrane protein</topology>
    </subcellularLocation>
</comment>
<comment type="similarity">
    <text evidence="3">Belongs to the dolichyldiphosphatase family.</text>
</comment>
<name>DOPP1_PLEMO</name>